<keyword id="KW-0067">ATP-binding</keyword>
<keyword id="KW-0963">Cytoplasm</keyword>
<keyword id="KW-0418">Kinase</keyword>
<keyword id="KW-0547">Nucleotide-binding</keyword>
<keyword id="KW-0808">Transferase</keyword>
<feature type="chain" id="PRO_1000048194" description="Cytidylate kinase">
    <location>
        <begin position="1"/>
        <end position="228"/>
    </location>
</feature>
<feature type="binding site" evidence="1">
    <location>
        <begin position="17"/>
        <end position="25"/>
    </location>
    <ligand>
        <name>ATP</name>
        <dbReference type="ChEBI" id="CHEBI:30616"/>
    </ligand>
</feature>
<sequence>MKSTRPFHPTPVITIDGPTASGKGTVAALVAAHLGFHLLDSGALYRLAALASVRYGIAAEDIDALVKLIDDLHITFREGCAQLDGVDVSNDIRAEAVGNRASAIAVHGPVRTALVARQRAFRKTPGLVADGRDMGTVIFPDAVLKVFLTASAEARATRRHKQLMQKGFSANIDDLLRDLRERDARDSNRAAAPLKPAADAKLLDTSALSVDEAVDQVLQWYRALGQPA</sequence>
<evidence type="ECO:0000255" key="1">
    <source>
        <dbReference type="HAMAP-Rule" id="MF_00238"/>
    </source>
</evidence>
<dbReference type="EC" id="2.7.4.25" evidence="1"/>
<dbReference type="EMBL" id="CP000458">
    <property type="protein sequence ID" value="ABK07799.1"/>
    <property type="molecule type" value="Genomic_DNA"/>
</dbReference>
<dbReference type="RefSeq" id="WP_006476573.1">
    <property type="nucleotide sequence ID" value="NC_008542.1"/>
</dbReference>
<dbReference type="SMR" id="A0K5M2"/>
<dbReference type="GeneID" id="83047798"/>
<dbReference type="KEGG" id="bch:Bcen2424_1046"/>
<dbReference type="HOGENOM" id="CLU_079959_2_0_4"/>
<dbReference type="GO" id="GO:0005829">
    <property type="term" value="C:cytosol"/>
    <property type="evidence" value="ECO:0007669"/>
    <property type="project" value="TreeGrafter"/>
</dbReference>
<dbReference type="GO" id="GO:0005524">
    <property type="term" value="F:ATP binding"/>
    <property type="evidence" value="ECO:0007669"/>
    <property type="project" value="UniProtKB-UniRule"/>
</dbReference>
<dbReference type="GO" id="GO:0036430">
    <property type="term" value="F:CMP kinase activity"/>
    <property type="evidence" value="ECO:0007669"/>
    <property type="project" value="RHEA"/>
</dbReference>
<dbReference type="GO" id="GO:0036431">
    <property type="term" value="F:dCMP kinase activity"/>
    <property type="evidence" value="ECO:0007669"/>
    <property type="project" value="RHEA"/>
</dbReference>
<dbReference type="GO" id="GO:0015949">
    <property type="term" value="P:nucleobase-containing small molecule interconversion"/>
    <property type="evidence" value="ECO:0007669"/>
    <property type="project" value="TreeGrafter"/>
</dbReference>
<dbReference type="GO" id="GO:0006220">
    <property type="term" value="P:pyrimidine nucleotide metabolic process"/>
    <property type="evidence" value="ECO:0007669"/>
    <property type="project" value="UniProtKB-UniRule"/>
</dbReference>
<dbReference type="CDD" id="cd02020">
    <property type="entry name" value="CMPK"/>
    <property type="match status" value="1"/>
</dbReference>
<dbReference type="Gene3D" id="3.40.50.300">
    <property type="entry name" value="P-loop containing nucleotide triphosphate hydrolases"/>
    <property type="match status" value="1"/>
</dbReference>
<dbReference type="HAMAP" id="MF_00238">
    <property type="entry name" value="Cytidyl_kinase_type1"/>
    <property type="match status" value="1"/>
</dbReference>
<dbReference type="InterPro" id="IPR003136">
    <property type="entry name" value="Cytidylate_kin"/>
</dbReference>
<dbReference type="InterPro" id="IPR011994">
    <property type="entry name" value="Cytidylate_kinase_dom"/>
</dbReference>
<dbReference type="InterPro" id="IPR027417">
    <property type="entry name" value="P-loop_NTPase"/>
</dbReference>
<dbReference type="NCBIfam" id="TIGR00017">
    <property type="entry name" value="cmk"/>
    <property type="match status" value="1"/>
</dbReference>
<dbReference type="PANTHER" id="PTHR21299:SF2">
    <property type="entry name" value="CYTIDYLATE KINASE"/>
    <property type="match status" value="1"/>
</dbReference>
<dbReference type="PANTHER" id="PTHR21299">
    <property type="entry name" value="CYTIDYLATE KINASE/PANTOATE-BETA-ALANINE LIGASE"/>
    <property type="match status" value="1"/>
</dbReference>
<dbReference type="Pfam" id="PF02224">
    <property type="entry name" value="Cytidylate_kin"/>
    <property type="match status" value="1"/>
</dbReference>
<dbReference type="SUPFAM" id="SSF52540">
    <property type="entry name" value="P-loop containing nucleoside triphosphate hydrolases"/>
    <property type="match status" value="1"/>
</dbReference>
<protein>
    <recommendedName>
        <fullName evidence="1">Cytidylate kinase</fullName>
        <shortName evidence="1">CK</shortName>
        <ecNumber evidence="1">2.7.4.25</ecNumber>
    </recommendedName>
    <alternativeName>
        <fullName evidence="1">Cytidine monophosphate kinase</fullName>
        <shortName evidence="1">CMP kinase</shortName>
    </alternativeName>
</protein>
<name>KCY_BURCH</name>
<comment type="catalytic activity">
    <reaction evidence="1">
        <text>CMP + ATP = CDP + ADP</text>
        <dbReference type="Rhea" id="RHEA:11600"/>
        <dbReference type="ChEBI" id="CHEBI:30616"/>
        <dbReference type="ChEBI" id="CHEBI:58069"/>
        <dbReference type="ChEBI" id="CHEBI:60377"/>
        <dbReference type="ChEBI" id="CHEBI:456216"/>
        <dbReference type="EC" id="2.7.4.25"/>
    </reaction>
</comment>
<comment type="catalytic activity">
    <reaction evidence="1">
        <text>dCMP + ATP = dCDP + ADP</text>
        <dbReference type="Rhea" id="RHEA:25094"/>
        <dbReference type="ChEBI" id="CHEBI:30616"/>
        <dbReference type="ChEBI" id="CHEBI:57566"/>
        <dbReference type="ChEBI" id="CHEBI:58593"/>
        <dbReference type="ChEBI" id="CHEBI:456216"/>
        <dbReference type="EC" id="2.7.4.25"/>
    </reaction>
</comment>
<comment type="subcellular location">
    <subcellularLocation>
        <location evidence="1">Cytoplasm</location>
    </subcellularLocation>
</comment>
<comment type="similarity">
    <text evidence="1">Belongs to the cytidylate kinase family. Type 1 subfamily.</text>
</comment>
<accession>A0K5M2</accession>
<organism>
    <name type="scientific">Burkholderia cenocepacia (strain HI2424)</name>
    <dbReference type="NCBI Taxonomy" id="331272"/>
    <lineage>
        <taxon>Bacteria</taxon>
        <taxon>Pseudomonadati</taxon>
        <taxon>Pseudomonadota</taxon>
        <taxon>Betaproteobacteria</taxon>
        <taxon>Burkholderiales</taxon>
        <taxon>Burkholderiaceae</taxon>
        <taxon>Burkholderia</taxon>
        <taxon>Burkholderia cepacia complex</taxon>
    </lineage>
</organism>
<gene>
    <name evidence="1" type="primary">cmk</name>
    <name type="ordered locus">Bcen2424_1046</name>
</gene>
<reference key="1">
    <citation type="submission" date="2006-08" db="EMBL/GenBank/DDBJ databases">
        <title>Complete sequence of chromosome 1 of Burkholderia cenocepacia HI2424.</title>
        <authorList>
            <person name="Copeland A."/>
            <person name="Lucas S."/>
            <person name="Lapidus A."/>
            <person name="Barry K."/>
            <person name="Detter J.C."/>
            <person name="Glavina del Rio T."/>
            <person name="Hammon N."/>
            <person name="Israni S."/>
            <person name="Pitluck S."/>
            <person name="Chain P."/>
            <person name="Malfatti S."/>
            <person name="Shin M."/>
            <person name="Vergez L."/>
            <person name="Schmutz J."/>
            <person name="Larimer F."/>
            <person name="Land M."/>
            <person name="Hauser L."/>
            <person name="Kyrpides N."/>
            <person name="Kim E."/>
            <person name="LiPuma J.J."/>
            <person name="Gonzalez C.F."/>
            <person name="Konstantinidis K."/>
            <person name="Tiedje J.M."/>
            <person name="Richardson P."/>
        </authorList>
    </citation>
    <scope>NUCLEOTIDE SEQUENCE [LARGE SCALE GENOMIC DNA]</scope>
    <source>
        <strain>HI2424</strain>
    </source>
</reference>
<proteinExistence type="inferred from homology"/>